<accession>B1YQL3</accession>
<gene>
    <name evidence="1" type="primary">atpG</name>
    <name type="ordered locus">BamMC406_0105</name>
</gene>
<dbReference type="EMBL" id="CP001025">
    <property type="protein sequence ID" value="ACB62607.1"/>
    <property type="molecule type" value="Genomic_DNA"/>
</dbReference>
<dbReference type="RefSeq" id="WP_006751770.1">
    <property type="nucleotide sequence ID" value="NC_010551.1"/>
</dbReference>
<dbReference type="SMR" id="B1YQL3"/>
<dbReference type="GeneID" id="93084496"/>
<dbReference type="KEGG" id="bac:BamMC406_0105"/>
<dbReference type="HOGENOM" id="CLU_050669_0_1_4"/>
<dbReference type="OrthoDB" id="9812769at2"/>
<dbReference type="Proteomes" id="UP000001680">
    <property type="component" value="Chromosome 1"/>
</dbReference>
<dbReference type="GO" id="GO:0005886">
    <property type="term" value="C:plasma membrane"/>
    <property type="evidence" value="ECO:0007669"/>
    <property type="project" value="UniProtKB-SubCell"/>
</dbReference>
<dbReference type="GO" id="GO:0045259">
    <property type="term" value="C:proton-transporting ATP synthase complex"/>
    <property type="evidence" value="ECO:0007669"/>
    <property type="project" value="UniProtKB-KW"/>
</dbReference>
<dbReference type="GO" id="GO:0005524">
    <property type="term" value="F:ATP binding"/>
    <property type="evidence" value="ECO:0007669"/>
    <property type="project" value="UniProtKB-UniRule"/>
</dbReference>
<dbReference type="GO" id="GO:0046933">
    <property type="term" value="F:proton-transporting ATP synthase activity, rotational mechanism"/>
    <property type="evidence" value="ECO:0007669"/>
    <property type="project" value="UniProtKB-UniRule"/>
</dbReference>
<dbReference type="GO" id="GO:0042777">
    <property type="term" value="P:proton motive force-driven plasma membrane ATP synthesis"/>
    <property type="evidence" value="ECO:0007669"/>
    <property type="project" value="UniProtKB-UniRule"/>
</dbReference>
<dbReference type="CDD" id="cd12151">
    <property type="entry name" value="F1-ATPase_gamma"/>
    <property type="match status" value="1"/>
</dbReference>
<dbReference type="FunFam" id="1.10.287.80:FF:000005">
    <property type="entry name" value="ATP synthase gamma chain"/>
    <property type="match status" value="1"/>
</dbReference>
<dbReference type="Gene3D" id="3.40.1380.10">
    <property type="match status" value="1"/>
</dbReference>
<dbReference type="Gene3D" id="1.10.287.80">
    <property type="entry name" value="ATP synthase, gamma subunit, helix hairpin domain"/>
    <property type="match status" value="1"/>
</dbReference>
<dbReference type="HAMAP" id="MF_00815">
    <property type="entry name" value="ATP_synth_gamma_bact"/>
    <property type="match status" value="1"/>
</dbReference>
<dbReference type="InterPro" id="IPR035968">
    <property type="entry name" value="ATP_synth_F1_ATPase_gsu"/>
</dbReference>
<dbReference type="InterPro" id="IPR000131">
    <property type="entry name" value="ATP_synth_F1_gsu"/>
</dbReference>
<dbReference type="InterPro" id="IPR023632">
    <property type="entry name" value="ATP_synth_F1_gsu_CS"/>
</dbReference>
<dbReference type="NCBIfam" id="TIGR01146">
    <property type="entry name" value="ATPsyn_F1gamma"/>
    <property type="match status" value="1"/>
</dbReference>
<dbReference type="NCBIfam" id="NF004144">
    <property type="entry name" value="PRK05621.1-1"/>
    <property type="match status" value="1"/>
</dbReference>
<dbReference type="PANTHER" id="PTHR11693">
    <property type="entry name" value="ATP SYNTHASE GAMMA CHAIN"/>
    <property type="match status" value="1"/>
</dbReference>
<dbReference type="PANTHER" id="PTHR11693:SF22">
    <property type="entry name" value="ATP SYNTHASE SUBUNIT GAMMA, MITOCHONDRIAL"/>
    <property type="match status" value="1"/>
</dbReference>
<dbReference type="Pfam" id="PF00231">
    <property type="entry name" value="ATP-synt"/>
    <property type="match status" value="1"/>
</dbReference>
<dbReference type="PRINTS" id="PR00126">
    <property type="entry name" value="ATPASEGAMMA"/>
</dbReference>
<dbReference type="SUPFAM" id="SSF52943">
    <property type="entry name" value="ATP synthase (F1-ATPase), gamma subunit"/>
    <property type="match status" value="1"/>
</dbReference>
<dbReference type="PROSITE" id="PS00153">
    <property type="entry name" value="ATPASE_GAMMA"/>
    <property type="match status" value="1"/>
</dbReference>
<name>ATPG_BURA4</name>
<organism>
    <name type="scientific">Burkholderia ambifaria (strain MC40-6)</name>
    <dbReference type="NCBI Taxonomy" id="398577"/>
    <lineage>
        <taxon>Bacteria</taxon>
        <taxon>Pseudomonadati</taxon>
        <taxon>Pseudomonadota</taxon>
        <taxon>Betaproteobacteria</taxon>
        <taxon>Burkholderiales</taxon>
        <taxon>Burkholderiaceae</taxon>
        <taxon>Burkholderia</taxon>
        <taxon>Burkholderia cepacia complex</taxon>
    </lineage>
</organism>
<feature type="chain" id="PRO_1000134117" description="ATP synthase gamma chain">
    <location>
        <begin position="1"/>
        <end position="291"/>
    </location>
</feature>
<protein>
    <recommendedName>
        <fullName evidence="1">ATP synthase gamma chain</fullName>
    </recommendedName>
    <alternativeName>
        <fullName evidence="1">ATP synthase F1 sector gamma subunit</fullName>
    </alternativeName>
    <alternativeName>
        <fullName evidence="1">F-ATPase gamma subunit</fullName>
    </alternativeName>
</protein>
<proteinExistence type="inferred from homology"/>
<keyword id="KW-0066">ATP synthesis</keyword>
<keyword id="KW-0997">Cell inner membrane</keyword>
<keyword id="KW-1003">Cell membrane</keyword>
<keyword id="KW-0139">CF(1)</keyword>
<keyword id="KW-0375">Hydrogen ion transport</keyword>
<keyword id="KW-0406">Ion transport</keyword>
<keyword id="KW-0472">Membrane</keyword>
<keyword id="KW-0813">Transport</keyword>
<sequence>MAGMKEIRGKIKSVQNTRKITKAMEMVAASKMRRAQERMRAARPYADKVRAIAAHMSRANPEYRHPFMVANDGATTAGIILVTTDKGLCGGLNTNVLRATVQKFKELEEKGQKVEATAIGSKGLGFLNRFGAKVMSQVVHLGDTPHLDKLIGAVKTQLDLYSEGKLSAVYIAYTRFVNTMKQEAVIEQLLPLSSEHFEADDGTPATSWDYIYEPDAQAVVDELLVRYVEALVYQAVAENMASEQSARMVAMKAASDNAKTVISELQLVYNKSRQAAITKELSEIVGGAAAV</sequence>
<evidence type="ECO:0000255" key="1">
    <source>
        <dbReference type="HAMAP-Rule" id="MF_00815"/>
    </source>
</evidence>
<comment type="function">
    <text evidence="1">Produces ATP from ADP in the presence of a proton gradient across the membrane. The gamma chain is believed to be important in regulating ATPase activity and the flow of protons through the CF(0) complex.</text>
</comment>
<comment type="subunit">
    <text evidence="1">F-type ATPases have 2 components, CF(1) - the catalytic core - and CF(0) - the membrane proton channel. CF(1) has five subunits: alpha(3), beta(3), gamma(1), delta(1), epsilon(1). CF(0) has three main subunits: a, b and c.</text>
</comment>
<comment type="subcellular location">
    <subcellularLocation>
        <location evidence="1">Cell inner membrane</location>
        <topology evidence="1">Peripheral membrane protein</topology>
    </subcellularLocation>
</comment>
<comment type="similarity">
    <text evidence="1">Belongs to the ATPase gamma chain family.</text>
</comment>
<reference key="1">
    <citation type="submission" date="2008-04" db="EMBL/GenBank/DDBJ databases">
        <title>Complete sequence of chromosome 1 of Burkholderia ambifaria MC40-6.</title>
        <authorList>
            <person name="Copeland A."/>
            <person name="Lucas S."/>
            <person name="Lapidus A."/>
            <person name="Glavina del Rio T."/>
            <person name="Dalin E."/>
            <person name="Tice H."/>
            <person name="Pitluck S."/>
            <person name="Chain P."/>
            <person name="Malfatti S."/>
            <person name="Shin M."/>
            <person name="Vergez L."/>
            <person name="Lang D."/>
            <person name="Schmutz J."/>
            <person name="Larimer F."/>
            <person name="Land M."/>
            <person name="Hauser L."/>
            <person name="Kyrpides N."/>
            <person name="Lykidis A."/>
            <person name="Ramette A."/>
            <person name="Konstantinidis K."/>
            <person name="Tiedje J."/>
            <person name="Richardson P."/>
        </authorList>
    </citation>
    <scope>NUCLEOTIDE SEQUENCE [LARGE SCALE GENOMIC DNA]</scope>
    <source>
        <strain>MC40-6</strain>
    </source>
</reference>